<name>Y1389_STAS1</name>
<evidence type="ECO:0000250" key="1"/>
<evidence type="ECO:0000305" key="2"/>
<reference key="1">
    <citation type="journal article" date="2005" name="Proc. Natl. Acad. Sci. U.S.A.">
        <title>Whole genome sequence of Staphylococcus saprophyticus reveals the pathogenesis of uncomplicated urinary tract infection.</title>
        <authorList>
            <person name="Kuroda M."/>
            <person name="Yamashita A."/>
            <person name="Hirakawa H."/>
            <person name="Kumano M."/>
            <person name="Morikawa K."/>
            <person name="Higashide M."/>
            <person name="Maruyama A."/>
            <person name="Inose Y."/>
            <person name="Matoba K."/>
            <person name="Toh H."/>
            <person name="Kuhara S."/>
            <person name="Hattori M."/>
            <person name="Ohta T."/>
        </authorList>
    </citation>
    <scope>NUCLEOTIDE SEQUENCE [LARGE SCALE GENOMIC DNA]</scope>
    <source>
        <strain>ATCC 15305 / DSM 20229 / NCIMB 8711 / NCTC 7292 / S-41</strain>
    </source>
</reference>
<feature type="initiator methionine" description="Removed" evidence="1">
    <location>
        <position position="1"/>
    </location>
</feature>
<feature type="chain" id="PRO_0000209549" description="Probable tautomerase SSP1389">
    <location>
        <begin position="2"/>
        <end position="61"/>
    </location>
</feature>
<feature type="active site" description="Proton acceptor; via imino nitrogen" evidence="1">
    <location>
        <position position="2"/>
    </location>
</feature>
<proteinExistence type="inferred from homology"/>
<organism>
    <name type="scientific">Staphylococcus saprophyticus subsp. saprophyticus (strain ATCC 15305 / DSM 20229 / NCIMB 8711 / NCTC 7292 / S-41)</name>
    <dbReference type="NCBI Taxonomy" id="342451"/>
    <lineage>
        <taxon>Bacteria</taxon>
        <taxon>Bacillati</taxon>
        <taxon>Bacillota</taxon>
        <taxon>Bacilli</taxon>
        <taxon>Bacillales</taxon>
        <taxon>Staphylococcaceae</taxon>
        <taxon>Staphylococcus</taxon>
    </lineage>
</organism>
<protein>
    <recommendedName>
        <fullName>Probable tautomerase SSP1389</fullName>
        <ecNumber>5.3.2.-</ecNumber>
    </recommendedName>
</protein>
<dbReference type="EC" id="5.3.2.-"/>
<dbReference type="EMBL" id="AP008934">
    <property type="protein sequence ID" value="BAE18534.1"/>
    <property type="molecule type" value="Genomic_DNA"/>
</dbReference>
<dbReference type="RefSeq" id="WP_011303163.1">
    <property type="nucleotide sequence ID" value="NZ_MTGA01000038.1"/>
</dbReference>
<dbReference type="SMR" id="Q49XG3"/>
<dbReference type="GeneID" id="3617117"/>
<dbReference type="KEGG" id="ssp:SSP1389"/>
<dbReference type="PATRIC" id="fig|342451.11.peg.1391"/>
<dbReference type="eggNOG" id="COG1942">
    <property type="taxonomic scope" value="Bacteria"/>
</dbReference>
<dbReference type="HOGENOM" id="CLU_148073_5_1_9"/>
<dbReference type="OrthoDB" id="9804765at2"/>
<dbReference type="Proteomes" id="UP000006371">
    <property type="component" value="Chromosome"/>
</dbReference>
<dbReference type="GO" id="GO:0016853">
    <property type="term" value="F:isomerase activity"/>
    <property type="evidence" value="ECO:0007669"/>
    <property type="project" value="UniProtKB-KW"/>
</dbReference>
<dbReference type="Gene3D" id="3.30.429.10">
    <property type="entry name" value="Macrophage Migration Inhibitory Factor"/>
    <property type="match status" value="1"/>
</dbReference>
<dbReference type="InterPro" id="IPR018191">
    <property type="entry name" value="4-OT"/>
</dbReference>
<dbReference type="InterPro" id="IPR004370">
    <property type="entry name" value="4-OT-like_dom"/>
</dbReference>
<dbReference type="InterPro" id="IPR014347">
    <property type="entry name" value="Tautomerase/MIF_sf"/>
</dbReference>
<dbReference type="NCBIfam" id="NF002571">
    <property type="entry name" value="PRK02220.1"/>
    <property type="match status" value="1"/>
</dbReference>
<dbReference type="NCBIfam" id="TIGR00013">
    <property type="entry name" value="taut"/>
    <property type="match status" value="1"/>
</dbReference>
<dbReference type="PANTHER" id="PTHR35530:SF1">
    <property type="entry name" value="2-HYDROXYMUCONATE TAUTOMERASE"/>
    <property type="match status" value="1"/>
</dbReference>
<dbReference type="PANTHER" id="PTHR35530">
    <property type="entry name" value="TAUTOMERASE-RELATED"/>
    <property type="match status" value="1"/>
</dbReference>
<dbReference type="Pfam" id="PF01361">
    <property type="entry name" value="Tautomerase"/>
    <property type="match status" value="1"/>
</dbReference>
<dbReference type="SUPFAM" id="SSF55331">
    <property type="entry name" value="Tautomerase/MIF"/>
    <property type="match status" value="1"/>
</dbReference>
<comment type="similarity">
    <text evidence="2">Belongs to the 4-oxalocrotonate tautomerase family.</text>
</comment>
<sequence>MPIVNVKLLEGRSDEQLKNLVTEVTNAVEKTTGANKEAIQIVIEEMKASHYGVAGVRKSDQ</sequence>
<keyword id="KW-0413">Isomerase</keyword>
<keyword id="KW-1185">Reference proteome</keyword>
<gene>
    <name type="ordered locus">SSP1389</name>
</gene>
<accession>Q49XG3</accession>